<proteinExistence type="evidence at protein level"/>
<name>CY226_POSPM</name>
<comment type="function">
    <text evidence="4 7">Cytochrome P450 monooxygenase that is able to use anthracene, carbazole and phenanthrene as substrates for oxidation (PubMed:21938516). These multifunctional properties against a series of polycyclic aromatic hydrocarbons (PAHs) suggest that CYP226 would play important roles, at least in part, in fungal metabolic systems involved in xenobiotic detoxification (Probable).</text>
</comment>
<comment type="cofactor">
    <cofactor evidence="1">
        <name>heme</name>
        <dbReference type="ChEBI" id="CHEBI:30413"/>
    </cofactor>
</comment>
<comment type="pathway">
    <text evidence="6">Secondary metabolite biosynthesis.</text>
</comment>
<comment type="subcellular location">
    <subcellularLocation>
        <location evidence="2">Membrane</location>
        <topology evidence="2">Single-pass membrane protein</topology>
    </subcellularLocation>
</comment>
<comment type="similarity">
    <text evidence="6">Belongs to the cytochrome P450 family.</text>
</comment>
<sequence>MQASDPIPPQLGVPFATSYAALTVAAVTLLAALLVHELSAYSKRRSMPPGPFRWPLIGNALQMPQIHPWLTFSRWARVYGDIFYLDALGQHIVVINSATVARELLDRRSSIYSGRPHLTMVGDLAGYDRMIVMQPYGDELRQQRRLISQTLSTSTIGQYYDIQEAAARRLVLGVIDDPSSLEGQIKMNIASIIMLVTYGYTVKGTEDVFFGRAIEIMDNLTLAARPGVWLADMIPQLKYFPSWMPGLSSLKAAEAWRKLLHTTNGMVYQWCKENSENGTAHLPNLCASVLAQAEGKATLQLEESLMWAALTVLSGGLDTNISTILSFILAMLHYPDVQKKAQAEIDAVVGSGRLPQISDKSSLPYIRSVIAESYRWLPATPLSVPHALDEDDIYDGSFLPKGSIIMPNVWHMLHDPKIYPEPDAFKPERYGGSDIEMKKVTDIAFGFGRRACPGFYFAEGTIFSIVVTVLATCDIVPVVNDHGQEIIPDIRYSTNVVLCPEDVKCTFRPRSEQAKSALIDSMTGVL</sequence>
<reference key="1">
    <citation type="journal article" date="2012" name="Arch. Microbiol.">
        <title>Molecular identification and functional characterization of cytochrome P450 monooxygenases from the brown-rot basidiomycete Postia placenta.</title>
        <authorList>
            <person name="Ide M."/>
            <person name="Ichinose H."/>
            <person name="Wariishi H."/>
        </authorList>
    </citation>
    <scope>NUCLEOTIDE SEQUENCE [MRNA]</scope>
    <scope>IDENTIFICATION</scope>
    <scope>FUNCTION</scope>
    <scope>CATALYTIC ACTIVITY</scope>
    <source>
        <strain>ATCC 44394 / Madison 698-R</strain>
    </source>
</reference>
<protein>
    <recommendedName>
        <fullName evidence="5">Cytochrome P450 monooxygenase 226</fullName>
        <ecNumber evidence="4">1.-.-.-</ecNumber>
    </recommendedName>
</protein>
<feature type="chain" id="PRO_0000451371" description="Cytochrome P450 monooxygenase 226">
    <location>
        <begin position="1"/>
        <end position="526"/>
    </location>
</feature>
<feature type="transmembrane region" description="Helical" evidence="2">
    <location>
        <begin position="15"/>
        <end position="35"/>
    </location>
</feature>
<feature type="binding site" description="axial binding residue" evidence="1">
    <location>
        <position position="452"/>
    </location>
    <ligand>
        <name>heme</name>
        <dbReference type="ChEBI" id="CHEBI:30413"/>
    </ligand>
    <ligandPart>
        <name>Fe</name>
        <dbReference type="ChEBI" id="CHEBI:18248"/>
    </ligandPart>
</feature>
<feature type="glycosylation site" description="N-linked (GlcNAc...) asparagine" evidence="3">
    <location>
        <position position="219"/>
    </location>
</feature>
<feature type="glycosylation site" description="N-linked (GlcNAc...) asparagine" evidence="3">
    <location>
        <position position="277"/>
    </location>
</feature>
<feature type="glycosylation site" description="N-linked (GlcNAc...) asparagine" evidence="3">
    <location>
        <position position="320"/>
    </location>
</feature>
<evidence type="ECO:0000250" key="1">
    <source>
        <dbReference type="UniProtKB" id="P04798"/>
    </source>
</evidence>
<evidence type="ECO:0000255" key="2"/>
<evidence type="ECO:0000255" key="3">
    <source>
        <dbReference type="PROSITE-ProRule" id="PRU00498"/>
    </source>
</evidence>
<evidence type="ECO:0000269" key="4">
    <source>
    </source>
</evidence>
<evidence type="ECO:0000303" key="5">
    <source>
    </source>
</evidence>
<evidence type="ECO:0000305" key="6"/>
<evidence type="ECO:0000305" key="7">
    <source>
    </source>
</evidence>
<dbReference type="EC" id="1.-.-.-" evidence="4"/>
<dbReference type="EMBL" id="AB573398">
    <property type="protein sequence ID" value="BAK09531.1"/>
    <property type="molecule type" value="mRNA"/>
</dbReference>
<dbReference type="SMR" id="F1SYI7"/>
<dbReference type="GlyCosmos" id="F1SYI7">
    <property type="glycosylation" value="3 sites, No reported glycans"/>
</dbReference>
<dbReference type="GO" id="GO:0016020">
    <property type="term" value="C:membrane"/>
    <property type="evidence" value="ECO:0007669"/>
    <property type="project" value="UniProtKB-SubCell"/>
</dbReference>
<dbReference type="GO" id="GO:0020037">
    <property type="term" value="F:heme binding"/>
    <property type="evidence" value="ECO:0007669"/>
    <property type="project" value="InterPro"/>
</dbReference>
<dbReference type="GO" id="GO:0005506">
    <property type="term" value="F:iron ion binding"/>
    <property type="evidence" value="ECO:0007669"/>
    <property type="project" value="InterPro"/>
</dbReference>
<dbReference type="GO" id="GO:0004497">
    <property type="term" value="F:monooxygenase activity"/>
    <property type="evidence" value="ECO:0007669"/>
    <property type="project" value="UniProtKB-KW"/>
</dbReference>
<dbReference type="GO" id="GO:0016705">
    <property type="term" value="F:oxidoreductase activity, acting on paired donors, with incorporation or reduction of molecular oxygen"/>
    <property type="evidence" value="ECO:0007669"/>
    <property type="project" value="InterPro"/>
</dbReference>
<dbReference type="CDD" id="cd11065">
    <property type="entry name" value="CYP64-like"/>
    <property type="match status" value="1"/>
</dbReference>
<dbReference type="Gene3D" id="1.10.630.10">
    <property type="entry name" value="Cytochrome P450"/>
    <property type="match status" value="1"/>
</dbReference>
<dbReference type="InterPro" id="IPR001128">
    <property type="entry name" value="Cyt_P450"/>
</dbReference>
<dbReference type="InterPro" id="IPR017972">
    <property type="entry name" value="Cyt_P450_CS"/>
</dbReference>
<dbReference type="InterPro" id="IPR002401">
    <property type="entry name" value="Cyt_P450_E_grp-I"/>
</dbReference>
<dbReference type="InterPro" id="IPR036396">
    <property type="entry name" value="Cyt_P450_sf"/>
</dbReference>
<dbReference type="InterPro" id="IPR050364">
    <property type="entry name" value="Cytochrome_P450_fung"/>
</dbReference>
<dbReference type="PANTHER" id="PTHR46300:SF7">
    <property type="entry name" value="P450, PUTATIVE (EUROFUNG)-RELATED"/>
    <property type="match status" value="1"/>
</dbReference>
<dbReference type="PANTHER" id="PTHR46300">
    <property type="entry name" value="P450, PUTATIVE (EUROFUNG)-RELATED-RELATED"/>
    <property type="match status" value="1"/>
</dbReference>
<dbReference type="Pfam" id="PF00067">
    <property type="entry name" value="p450"/>
    <property type="match status" value="1"/>
</dbReference>
<dbReference type="PRINTS" id="PR00463">
    <property type="entry name" value="EP450I"/>
</dbReference>
<dbReference type="SUPFAM" id="SSF48264">
    <property type="entry name" value="Cytochrome P450"/>
    <property type="match status" value="1"/>
</dbReference>
<dbReference type="PROSITE" id="PS00086">
    <property type="entry name" value="CYTOCHROME_P450"/>
    <property type="match status" value="1"/>
</dbReference>
<gene>
    <name evidence="5" type="primary">CYP226</name>
    <name evidence="5" type="synonym">CYP5350B9</name>
</gene>
<organism>
    <name type="scientific">Postia placenta (strain ATCC 44394 / Madison 698-R)</name>
    <name type="common">Brown rot fungus</name>
    <name type="synonym">Poria monticola</name>
    <dbReference type="NCBI Taxonomy" id="561896"/>
    <lineage>
        <taxon>Eukaryota</taxon>
        <taxon>Fungi</taxon>
        <taxon>Dikarya</taxon>
        <taxon>Basidiomycota</taxon>
        <taxon>Agaricomycotina</taxon>
        <taxon>Agaricomycetes</taxon>
        <taxon>Polyporales</taxon>
        <taxon>Adustoporiaceae</taxon>
        <taxon>Rhodonia</taxon>
    </lineage>
</organism>
<keyword id="KW-0325">Glycoprotein</keyword>
<keyword id="KW-0349">Heme</keyword>
<keyword id="KW-0408">Iron</keyword>
<keyword id="KW-0472">Membrane</keyword>
<keyword id="KW-0479">Metal-binding</keyword>
<keyword id="KW-0503">Monooxygenase</keyword>
<keyword id="KW-0560">Oxidoreductase</keyword>
<keyword id="KW-0812">Transmembrane</keyword>
<keyword id="KW-1133">Transmembrane helix</keyword>
<accession>F1SYI7</accession>